<feature type="chain" id="PRO_0000182395" description="Stathmin-1-B">
    <location>
        <begin position="1" status="less than"/>
        <end position="71"/>
    </location>
</feature>
<feature type="domain" description="SLD" evidence="3">
    <location>
        <begin position="1"/>
        <end position="71"/>
    </location>
</feature>
<feature type="coiled-coil region" evidence="2">
    <location>
        <begin position="1" status="less than"/>
        <end position="67"/>
    </location>
</feature>
<feature type="non-terminal residue">
    <location>
        <position position="1"/>
    </location>
</feature>
<proteinExistence type="evidence at transcript level"/>
<accession>Q09005</accession>
<name>STM1B_XENLA</name>
<keyword id="KW-0175">Coiled coil</keyword>
<keyword id="KW-0963">Cytoplasm</keyword>
<keyword id="KW-0206">Cytoskeleton</keyword>
<keyword id="KW-0493">Microtubule</keyword>
<keyword id="KW-0597">Phosphoprotein</keyword>
<keyword id="KW-1185">Reference proteome</keyword>
<organism>
    <name type="scientific">Xenopus laevis</name>
    <name type="common">African clawed frog</name>
    <dbReference type="NCBI Taxonomy" id="8355"/>
    <lineage>
        <taxon>Eukaryota</taxon>
        <taxon>Metazoa</taxon>
        <taxon>Chordata</taxon>
        <taxon>Craniata</taxon>
        <taxon>Vertebrata</taxon>
        <taxon>Euteleostomi</taxon>
        <taxon>Amphibia</taxon>
        <taxon>Batrachia</taxon>
        <taxon>Anura</taxon>
        <taxon>Pipoidea</taxon>
        <taxon>Pipidae</taxon>
        <taxon>Xenopodinae</taxon>
        <taxon>Xenopus</taxon>
        <taxon>Xenopus</taxon>
    </lineage>
</organism>
<reference key="1">
    <citation type="journal article" date="1993" name="J. Biol. Chem.">
        <title>Stathmin gene family: phylogenetic conservation and developmental regulation in Xenopus.</title>
        <authorList>
            <person name="Maucuer A."/>
            <person name="Moreau J."/>
            <person name="Mechali M."/>
            <person name="Sobel A."/>
        </authorList>
    </citation>
    <scope>NUCLEOTIDE SEQUENCE [MRNA]</scope>
    <source>
        <tissue>Oocyte</tissue>
    </source>
</reference>
<gene>
    <name type="primary">stmn1-b</name>
</gene>
<dbReference type="EMBL" id="X71432">
    <property type="protein sequence ID" value="CAA50563.1"/>
    <property type="molecule type" value="mRNA"/>
</dbReference>
<dbReference type="PIR" id="I51705">
    <property type="entry name" value="I51705"/>
</dbReference>
<dbReference type="SMR" id="Q09005"/>
<dbReference type="AGR" id="Xenbase:XB-GENE-481619"/>
<dbReference type="Xenbase" id="XB-GENE-481619">
    <property type="gene designation" value="stmn1.S"/>
</dbReference>
<dbReference type="Proteomes" id="UP000186698">
    <property type="component" value="Unplaced"/>
</dbReference>
<dbReference type="GO" id="GO:0005737">
    <property type="term" value="C:cytoplasm"/>
    <property type="evidence" value="ECO:0007669"/>
    <property type="project" value="UniProtKB-KW"/>
</dbReference>
<dbReference type="GO" id="GO:0005874">
    <property type="term" value="C:microtubule"/>
    <property type="evidence" value="ECO:0007669"/>
    <property type="project" value="UniProtKB-KW"/>
</dbReference>
<dbReference type="GO" id="GO:0043005">
    <property type="term" value="C:neuron projection"/>
    <property type="evidence" value="ECO:0007669"/>
    <property type="project" value="TreeGrafter"/>
</dbReference>
<dbReference type="GO" id="GO:0015631">
    <property type="term" value="F:tubulin binding"/>
    <property type="evidence" value="ECO:0007669"/>
    <property type="project" value="TreeGrafter"/>
</dbReference>
<dbReference type="GO" id="GO:0007019">
    <property type="term" value="P:microtubule depolymerization"/>
    <property type="evidence" value="ECO:0007669"/>
    <property type="project" value="TreeGrafter"/>
</dbReference>
<dbReference type="GO" id="GO:0031175">
    <property type="term" value="P:neuron projection development"/>
    <property type="evidence" value="ECO:0007669"/>
    <property type="project" value="TreeGrafter"/>
</dbReference>
<dbReference type="GO" id="GO:0031110">
    <property type="term" value="P:regulation of microtubule polymerization or depolymerization"/>
    <property type="evidence" value="ECO:0007669"/>
    <property type="project" value="InterPro"/>
</dbReference>
<dbReference type="Gene3D" id="6.10.280.30">
    <property type="match status" value="1"/>
</dbReference>
<dbReference type="InterPro" id="IPR000956">
    <property type="entry name" value="Stathmin_fam"/>
</dbReference>
<dbReference type="InterPro" id="IPR036002">
    <property type="entry name" value="Stathmin_sf"/>
</dbReference>
<dbReference type="PANTHER" id="PTHR10104">
    <property type="entry name" value="STATHMIN"/>
    <property type="match status" value="1"/>
</dbReference>
<dbReference type="PANTHER" id="PTHR10104:SF5">
    <property type="entry name" value="STATHMIN"/>
    <property type="match status" value="1"/>
</dbReference>
<dbReference type="Pfam" id="PF00836">
    <property type="entry name" value="Stathmin"/>
    <property type="match status" value="1"/>
</dbReference>
<dbReference type="PRINTS" id="PR00345">
    <property type="entry name" value="STATHMIN"/>
</dbReference>
<dbReference type="SUPFAM" id="SSF101494">
    <property type="entry name" value="Stathmin"/>
    <property type="match status" value="1"/>
</dbReference>
<dbReference type="PROSITE" id="PS51663">
    <property type="entry name" value="STATHMIN_3"/>
    <property type="match status" value="1"/>
</dbReference>
<comment type="function">
    <text evidence="1">Involved in the regulation of the microtubule (MT) filament system by destabilizing microtubules. It prevents assembly and promotes disassembly of microtubules (By similarity).</text>
</comment>
<comment type="subunit">
    <text evidence="1">Binds to two alpha/beta-tubulin heterodimers.</text>
</comment>
<comment type="subcellular location">
    <subcellularLocation>
        <location>Cytoplasm</location>
        <location>Cytoskeleton</location>
    </subcellularLocation>
</comment>
<comment type="tissue specificity">
    <text>Ubiquitous. Mostly abundant in brain and oocytes.</text>
</comment>
<comment type="developmental stage">
    <text>Accumulates during oogenesis and remains stable as a maternal product throughout early development.</text>
</comment>
<comment type="PTM">
    <text>From unphosphorylated forms to highly phosphorylated ones in the mature egg, followed by progressive dephosphorylation from the mid-blastula to the tailbud stage.</text>
</comment>
<comment type="similarity">
    <text evidence="4">Belongs to the stathmin family.</text>
</comment>
<sequence>KREHEKEVLQKAIEENNNFSKMAEEKLTTKMEAIKENREAQMAAKLERLREKDKKLEEIRKGKECKEPSED</sequence>
<protein>
    <recommendedName>
        <fullName>Stathmin-1-B</fullName>
    </recommendedName>
    <alternativeName>
        <fullName>Stathmin clone XO20</fullName>
    </alternativeName>
</protein>
<evidence type="ECO:0000250" key="1"/>
<evidence type="ECO:0000255" key="2"/>
<evidence type="ECO:0000255" key="3">
    <source>
        <dbReference type="PROSITE-ProRule" id="PRU00998"/>
    </source>
</evidence>
<evidence type="ECO:0000305" key="4"/>